<name>MOAA_SACI1</name>
<protein>
    <recommendedName>
        <fullName evidence="1">Probable GTP 3',8-cyclase</fullName>
        <ecNumber evidence="1">4.1.99.22</ecNumber>
    </recommendedName>
    <alternativeName>
        <fullName evidence="1">Molybdenum cofactor biosynthesis protein A</fullName>
    </alternativeName>
</protein>
<accession>C3NGB5</accession>
<reference key="1">
    <citation type="journal article" date="2009" name="Proc. Natl. Acad. Sci. U.S.A.">
        <title>Biogeography of the Sulfolobus islandicus pan-genome.</title>
        <authorList>
            <person name="Reno M.L."/>
            <person name="Held N.L."/>
            <person name="Fields C.J."/>
            <person name="Burke P.V."/>
            <person name="Whitaker R.J."/>
        </authorList>
    </citation>
    <scope>NUCLEOTIDE SEQUENCE [LARGE SCALE GENOMIC DNA]</scope>
    <source>
        <strain>Y.N.15.51 / Yellowstone #2</strain>
    </source>
</reference>
<proteinExistence type="inferred from homology"/>
<gene>
    <name evidence="1" type="primary">moaA</name>
    <name type="ordered locus">YN1551_1068</name>
</gene>
<sequence length="308" mass="35344">MIDRFGRPLEDLRITLTHVCNFECFFCHMEGEEGDNYILSKEDILLVAKVAKNFDINSVKLTGGEPTLRRDLVEIVRGLKQLGYRDVSMTTNGLLLKDLAYKLKLAGLDRINVSLHAISRETFKKITGVDAFDRVIEGIKSAIDVGLVPVKLNFVVNRRNREEVFKFIELSQNLGVNEIHLIELHPVGLGKLAFKEHDDLREIEEYIEKISIKKQIRKKHFRPRYVLPSGLIVEVIKPYANPIFCAGCNRIRLSVDGKLKTCLYREDNVIDILDILKGEYSEDVKEELLGRAFMIAIAIREPNFKYKI</sequence>
<organism>
    <name type="scientific">Saccharolobus islandicus (strain Y.N.15.51 / Yellowstone #2)</name>
    <name type="common">Sulfolobus islandicus</name>
    <dbReference type="NCBI Taxonomy" id="419942"/>
    <lineage>
        <taxon>Archaea</taxon>
        <taxon>Thermoproteota</taxon>
        <taxon>Thermoprotei</taxon>
        <taxon>Sulfolobales</taxon>
        <taxon>Sulfolobaceae</taxon>
        <taxon>Saccharolobus</taxon>
    </lineage>
</organism>
<keyword id="KW-0004">4Fe-4S</keyword>
<keyword id="KW-0342">GTP-binding</keyword>
<keyword id="KW-0408">Iron</keyword>
<keyword id="KW-0411">Iron-sulfur</keyword>
<keyword id="KW-0456">Lyase</keyword>
<keyword id="KW-0479">Metal-binding</keyword>
<keyword id="KW-0501">Molybdenum cofactor biosynthesis</keyword>
<keyword id="KW-0547">Nucleotide-binding</keyword>
<keyword id="KW-0949">S-adenosyl-L-methionine</keyword>
<evidence type="ECO:0000255" key="1">
    <source>
        <dbReference type="HAMAP-Rule" id="MF_01225"/>
    </source>
</evidence>
<evidence type="ECO:0000255" key="2">
    <source>
        <dbReference type="PROSITE-ProRule" id="PRU01266"/>
    </source>
</evidence>
<dbReference type="EC" id="4.1.99.22" evidence="1"/>
<dbReference type="EMBL" id="CP001404">
    <property type="protein sequence ID" value="ACP48175.1"/>
    <property type="molecule type" value="Genomic_DNA"/>
</dbReference>
<dbReference type="RefSeq" id="WP_012717325.1">
    <property type="nucleotide sequence ID" value="NC_012623.1"/>
</dbReference>
<dbReference type="SMR" id="C3NGB5"/>
<dbReference type="GeneID" id="7810796"/>
<dbReference type="KEGG" id="sin:YN1551_1068"/>
<dbReference type="HOGENOM" id="CLU_009273_0_1_2"/>
<dbReference type="UniPathway" id="UPA00344"/>
<dbReference type="Proteomes" id="UP000006818">
    <property type="component" value="Chromosome"/>
</dbReference>
<dbReference type="GO" id="GO:0051539">
    <property type="term" value="F:4 iron, 4 sulfur cluster binding"/>
    <property type="evidence" value="ECO:0007669"/>
    <property type="project" value="UniProtKB-UniRule"/>
</dbReference>
<dbReference type="GO" id="GO:0061799">
    <property type="term" value="F:cyclic pyranopterin monophosphate synthase activity"/>
    <property type="evidence" value="ECO:0007669"/>
    <property type="project" value="TreeGrafter"/>
</dbReference>
<dbReference type="GO" id="GO:0061798">
    <property type="term" value="F:GTP 3',8'-cyclase activity"/>
    <property type="evidence" value="ECO:0007669"/>
    <property type="project" value="UniProtKB-UniRule"/>
</dbReference>
<dbReference type="GO" id="GO:0005525">
    <property type="term" value="F:GTP binding"/>
    <property type="evidence" value="ECO:0007669"/>
    <property type="project" value="UniProtKB-UniRule"/>
</dbReference>
<dbReference type="GO" id="GO:0046872">
    <property type="term" value="F:metal ion binding"/>
    <property type="evidence" value="ECO:0007669"/>
    <property type="project" value="UniProtKB-KW"/>
</dbReference>
<dbReference type="GO" id="GO:1904047">
    <property type="term" value="F:S-adenosyl-L-methionine binding"/>
    <property type="evidence" value="ECO:0007669"/>
    <property type="project" value="UniProtKB-UniRule"/>
</dbReference>
<dbReference type="GO" id="GO:0006777">
    <property type="term" value="P:Mo-molybdopterin cofactor biosynthetic process"/>
    <property type="evidence" value="ECO:0007669"/>
    <property type="project" value="UniProtKB-UniRule"/>
</dbReference>
<dbReference type="CDD" id="cd01335">
    <property type="entry name" value="Radical_SAM"/>
    <property type="match status" value="1"/>
</dbReference>
<dbReference type="CDD" id="cd21117">
    <property type="entry name" value="Twitch_MoaA"/>
    <property type="match status" value="1"/>
</dbReference>
<dbReference type="Gene3D" id="3.20.20.70">
    <property type="entry name" value="Aldolase class I"/>
    <property type="match status" value="1"/>
</dbReference>
<dbReference type="HAMAP" id="MF_01225_A">
    <property type="entry name" value="MoaA_A"/>
    <property type="match status" value="1"/>
</dbReference>
<dbReference type="InterPro" id="IPR013785">
    <property type="entry name" value="Aldolase_TIM"/>
</dbReference>
<dbReference type="InterPro" id="IPR006638">
    <property type="entry name" value="Elp3/MiaA/NifB-like_rSAM"/>
</dbReference>
<dbReference type="InterPro" id="IPR013485">
    <property type="entry name" value="MoaA_arc"/>
</dbReference>
<dbReference type="InterPro" id="IPR010505">
    <property type="entry name" value="MoaA_twitch"/>
</dbReference>
<dbReference type="InterPro" id="IPR050105">
    <property type="entry name" value="MoCo_biosynth_MoaA/MoaC"/>
</dbReference>
<dbReference type="InterPro" id="IPR007197">
    <property type="entry name" value="rSAM"/>
</dbReference>
<dbReference type="NCBIfam" id="TIGR02668">
    <property type="entry name" value="moaA_archaeal"/>
    <property type="match status" value="1"/>
</dbReference>
<dbReference type="NCBIfam" id="NF001199">
    <property type="entry name" value="PRK00164.2-1"/>
    <property type="match status" value="1"/>
</dbReference>
<dbReference type="PANTHER" id="PTHR22960:SF0">
    <property type="entry name" value="MOLYBDENUM COFACTOR BIOSYNTHESIS PROTEIN 1"/>
    <property type="match status" value="1"/>
</dbReference>
<dbReference type="PANTHER" id="PTHR22960">
    <property type="entry name" value="MOLYBDOPTERIN COFACTOR SYNTHESIS PROTEIN A"/>
    <property type="match status" value="1"/>
</dbReference>
<dbReference type="Pfam" id="PF06463">
    <property type="entry name" value="Mob_synth_C"/>
    <property type="match status" value="1"/>
</dbReference>
<dbReference type="Pfam" id="PF04055">
    <property type="entry name" value="Radical_SAM"/>
    <property type="match status" value="1"/>
</dbReference>
<dbReference type="SFLD" id="SFLDG01383">
    <property type="entry name" value="cyclic_pyranopterin_phosphate"/>
    <property type="match status" value="1"/>
</dbReference>
<dbReference type="SFLD" id="SFLDG01067">
    <property type="entry name" value="SPASM/twitch_domain_containing"/>
    <property type="match status" value="1"/>
</dbReference>
<dbReference type="SMART" id="SM00729">
    <property type="entry name" value="Elp3"/>
    <property type="match status" value="1"/>
</dbReference>
<dbReference type="SUPFAM" id="SSF102114">
    <property type="entry name" value="Radical SAM enzymes"/>
    <property type="match status" value="1"/>
</dbReference>
<dbReference type="PROSITE" id="PS51918">
    <property type="entry name" value="RADICAL_SAM"/>
    <property type="match status" value="1"/>
</dbReference>
<feature type="chain" id="PRO_1000214004" description="Probable GTP 3',8-cyclase">
    <location>
        <begin position="1"/>
        <end position="308"/>
    </location>
</feature>
<feature type="domain" description="Radical SAM core" evidence="2">
    <location>
        <begin position="4"/>
        <end position="224"/>
    </location>
</feature>
<feature type="binding site" evidence="1">
    <location>
        <position position="13"/>
    </location>
    <ligand>
        <name>GTP</name>
        <dbReference type="ChEBI" id="CHEBI:37565"/>
    </ligand>
</feature>
<feature type="binding site" evidence="1">
    <location>
        <position position="20"/>
    </location>
    <ligand>
        <name>[4Fe-4S] cluster</name>
        <dbReference type="ChEBI" id="CHEBI:49883"/>
        <label>1</label>
        <note>4Fe-4S-S-AdoMet</note>
    </ligand>
</feature>
<feature type="binding site" evidence="1">
    <location>
        <position position="24"/>
    </location>
    <ligand>
        <name>[4Fe-4S] cluster</name>
        <dbReference type="ChEBI" id="CHEBI:49883"/>
        <label>1</label>
        <note>4Fe-4S-S-AdoMet</note>
    </ligand>
</feature>
<feature type="binding site" evidence="1">
    <location>
        <position position="27"/>
    </location>
    <ligand>
        <name>[4Fe-4S] cluster</name>
        <dbReference type="ChEBI" id="CHEBI:49883"/>
        <label>1</label>
        <note>4Fe-4S-S-AdoMet</note>
    </ligand>
</feature>
<feature type="binding site" evidence="1">
    <location>
        <position position="60"/>
    </location>
    <ligand>
        <name>GTP</name>
        <dbReference type="ChEBI" id="CHEBI:37565"/>
    </ligand>
</feature>
<feature type="binding site" evidence="1">
    <location>
        <position position="64"/>
    </location>
    <ligand>
        <name>S-adenosyl-L-methionine</name>
        <dbReference type="ChEBI" id="CHEBI:59789"/>
    </ligand>
</feature>
<feature type="binding site" evidence="1">
    <location>
        <position position="90"/>
    </location>
    <ligand>
        <name>GTP</name>
        <dbReference type="ChEBI" id="CHEBI:37565"/>
    </ligand>
</feature>
<feature type="binding site" evidence="1">
    <location>
        <position position="114"/>
    </location>
    <ligand>
        <name>S-adenosyl-L-methionine</name>
        <dbReference type="ChEBI" id="CHEBI:59789"/>
    </ligand>
</feature>
<feature type="binding site" evidence="1">
    <location>
        <position position="151"/>
    </location>
    <ligand>
        <name>GTP</name>
        <dbReference type="ChEBI" id="CHEBI:37565"/>
    </ligand>
</feature>
<feature type="binding site" evidence="1">
    <location>
        <position position="245"/>
    </location>
    <ligand>
        <name>[4Fe-4S] cluster</name>
        <dbReference type="ChEBI" id="CHEBI:49883"/>
        <label>2</label>
        <note>4Fe-4S-substrate</note>
    </ligand>
</feature>
<feature type="binding site" evidence="1">
    <location>
        <position position="248"/>
    </location>
    <ligand>
        <name>[4Fe-4S] cluster</name>
        <dbReference type="ChEBI" id="CHEBI:49883"/>
        <label>2</label>
        <note>4Fe-4S-substrate</note>
    </ligand>
</feature>
<feature type="binding site" evidence="1">
    <location>
        <begin position="250"/>
        <end position="252"/>
    </location>
    <ligand>
        <name>GTP</name>
        <dbReference type="ChEBI" id="CHEBI:37565"/>
    </ligand>
</feature>
<feature type="binding site" evidence="1">
    <location>
        <position position="262"/>
    </location>
    <ligand>
        <name>[4Fe-4S] cluster</name>
        <dbReference type="ChEBI" id="CHEBI:49883"/>
        <label>2</label>
        <note>4Fe-4S-substrate</note>
    </ligand>
</feature>
<comment type="function">
    <text evidence="1">Catalyzes the cyclization of GTP to (8S)-3',8-cyclo-7,8-dihydroguanosine 5'-triphosphate.</text>
</comment>
<comment type="catalytic activity">
    <reaction evidence="1">
        <text>GTP + AH2 + S-adenosyl-L-methionine = (8S)-3',8-cyclo-7,8-dihydroguanosine 5'-triphosphate + 5'-deoxyadenosine + L-methionine + A + H(+)</text>
        <dbReference type="Rhea" id="RHEA:49576"/>
        <dbReference type="ChEBI" id="CHEBI:13193"/>
        <dbReference type="ChEBI" id="CHEBI:15378"/>
        <dbReference type="ChEBI" id="CHEBI:17319"/>
        <dbReference type="ChEBI" id="CHEBI:17499"/>
        <dbReference type="ChEBI" id="CHEBI:37565"/>
        <dbReference type="ChEBI" id="CHEBI:57844"/>
        <dbReference type="ChEBI" id="CHEBI:59789"/>
        <dbReference type="ChEBI" id="CHEBI:131766"/>
        <dbReference type="EC" id="4.1.99.22"/>
    </reaction>
</comment>
<comment type="cofactor">
    <cofactor evidence="1">
        <name>[4Fe-4S] cluster</name>
        <dbReference type="ChEBI" id="CHEBI:49883"/>
    </cofactor>
    <text evidence="1">Binds 2 [4Fe-4S] clusters. Binds 1 [4Fe-4S] cluster coordinated with 3 cysteines and an exchangeable S-adenosyl-L-methionine and 1 [4Fe-4S] cluster coordinated with 3 cysteines and the GTP-derived substrate.</text>
</comment>
<comment type="pathway">
    <text evidence="1">Cofactor biosynthesis; molybdopterin biosynthesis.</text>
</comment>
<comment type="similarity">
    <text evidence="1">Belongs to the radical SAM superfamily. MoaA family.</text>
</comment>